<keyword id="KW-0028">Amino-acid biosynthesis</keyword>
<keyword id="KW-0067">ATP-binding</keyword>
<keyword id="KW-0963">Cytoplasm</keyword>
<keyword id="KW-0418">Kinase</keyword>
<keyword id="KW-0547">Nucleotide-binding</keyword>
<keyword id="KW-0641">Proline biosynthesis</keyword>
<keyword id="KW-0808">Transferase</keyword>
<organism>
    <name type="scientific">Paramagnetospirillum magneticum (strain ATCC 700264 / AMB-1)</name>
    <name type="common">Magnetospirillum magneticum</name>
    <dbReference type="NCBI Taxonomy" id="342108"/>
    <lineage>
        <taxon>Bacteria</taxon>
        <taxon>Pseudomonadati</taxon>
        <taxon>Pseudomonadota</taxon>
        <taxon>Alphaproteobacteria</taxon>
        <taxon>Rhodospirillales</taxon>
        <taxon>Magnetospirillaceae</taxon>
        <taxon>Paramagnetospirillum</taxon>
    </lineage>
</organism>
<sequence>MSPLAAAKRLIVKIGSSLLVDDSTGQVRRGWLETLAADIAACKARGQEVIVVSSGAVAVGRRKLGLVPPLKLEEKQAAAATGQIRLAHAWQDALAHHQITVAQVLLTLDDSENRRRYLNARSTLETLLKLGAVPVINENDTVATAEIRVGDNDRLAARVAQMVSADALVLFSDIDGLYTADPRKDPDARFIPEVHELTPEIEAMAGDPGSAYGSGGMVTKLVAARICLSAGCRMAITRGEPMHPLKTIEDGGRCTWFLPNSEPRTARKQWIFGSMKPTGTLVLDAGAARALAQGRSLLPAGITEVSGAFERGDCVLVKDGSGKVLGRGLVAYSADDSRAIMGRKSGEIEAILGFRGRDELIHRDDLVMEG</sequence>
<accession>Q2VZU1</accession>
<proteinExistence type="inferred from homology"/>
<feature type="chain" id="PRO_0000252984" description="Glutamate 5-kinase">
    <location>
        <begin position="1"/>
        <end position="370"/>
    </location>
</feature>
<feature type="domain" description="PUA" evidence="1">
    <location>
        <begin position="278"/>
        <end position="355"/>
    </location>
</feature>
<feature type="binding site" evidence="1">
    <location>
        <position position="13"/>
    </location>
    <ligand>
        <name>ATP</name>
        <dbReference type="ChEBI" id="CHEBI:30616"/>
    </ligand>
</feature>
<feature type="binding site" evidence="1">
    <location>
        <position position="54"/>
    </location>
    <ligand>
        <name>substrate</name>
    </ligand>
</feature>
<feature type="binding site" evidence="1">
    <location>
        <position position="140"/>
    </location>
    <ligand>
        <name>substrate</name>
    </ligand>
</feature>
<feature type="binding site" evidence="1">
    <location>
        <position position="152"/>
    </location>
    <ligand>
        <name>substrate</name>
    </ligand>
</feature>
<feature type="binding site" evidence="1">
    <location>
        <begin position="172"/>
        <end position="173"/>
    </location>
    <ligand>
        <name>ATP</name>
        <dbReference type="ChEBI" id="CHEBI:30616"/>
    </ligand>
</feature>
<feature type="binding site" evidence="1">
    <location>
        <begin position="214"/>
        <end position="220"/>
    </location>
    <ligand>
        <name>ATP</name>
        <dbReference type="ChEBI" id="CHEBI:30616"/>
    </ligand>
</feature>
<protein>
    <recommendedName>
        <fullName evidence="1">Glutamate 5-kinase</fullName>
        <ecNumber evidence="1">2.7.2.11</ecNumber>
    </recommendedName>
    <alternativeName>
        <fullName evidence="1">Gamma-glutamyl kinase</fullName>
        <shortName evidence="1">GK</shortName>
    </alternativeName>
</protein>
<dbReference type="EC" id="2.7.2.11" evidence="1"/>
<dbReference type="EMBL" id="AP007255">
    <property type="protein sequence ID" value="BAE52884.1"/>
    <property type="molecule type" value="Genomic_DNA"/>
</dbReference>
<dbReference type="RefSeq" id="WP_011386430.1">
    <property type="nucleotide sequence ID" value="NC_007626.1"/>
</dbReference>
<dbReference type="SMR" id="Q2VZU1"/>
<dbReference type="STRING" id="342108.amb4080"/>
<dbReference type="KEGG" id="mag:amb4080"/>
<dbReference type="HOGENOM" id="CLU_025400_2_0_5"/>
<dbReference type="OrthoDB" id="9804434at2"/>
<dbReference type="UniPathway" id="UPA00098">
    <property type="reaction ID" value="UER00359"/>
</dbReference>
<dbReference type="Proteomes" id="UP000007058">
    <property type="component" value="Chromosome"/>
</dbReference>
<dbReference type="GO" id="GO:0005829">
    <property type="term" value="C:cytosol"/>
    <property type="evidence" value="ECO:0007669"/>
    <property type="project" value="TreeGrafter"/>
</dbReference>
<dbReference type="GO" id="GO:0005524">
    <property type="term" value="F:ATP binding"/>
    <property type="evidence" value="ECO:0007669"/>
    <property type="project" value="UniProtKB-KW"/>
</dbReference>
<dbReference type="GO" id="GO:0004349">
    <property type="term" value="F:glutamate 5-kinase activity"/>
    <property type="evidence" value="ECO:0007669"/>
    <property type="project" value="UniProtKB-UniRule"/>
</dbReference>
<dbReference type="GO" id="GO:0003723">
    <property type="term" value="F:RNA binding"/>
    <property type="evidence" value="ECO:0007669"/>
    <property type="project" value="InterPro"/>
</dbReference>
<dbReference type="GO" id="GO:0055129">
    <property type="term" value="P:L-proline biosynthetic process"/>
    <property type="evidence" value="ECO:0007669"/>
    <property type="project" value="UniProtKB-UniRule"/>
</dbReference>
<dbReference type="CDD" id="cd04242">
    <property type="entry name" value="AAK_G5K_ProB"/>
    <property type="match status" value="1"/>
</dbReference>
<dbReference type="CDD" id="cd21157">
    <property type="entry name" value="PUA_G5K"/>
    <property type="match status" value="1"/>
</dbReference>
<dbReference type="FunFam" id="2.30.130.10:FF:000007">
    <property type="entry name" value="Glutamate 5-kinase"/>
    <property type="match status" value="1"/>
</dbReference>
<dbReference type="FunFam" id="3.40.1160.10:FF:000018">
    <property type="entry name" value="Glutamate 5-kinase"/>
    <property type="match status" value="1"/>
</dbReference>
<dbReference type="Gene3D" id="3.40.1160.10">
    <property type="entry name" value="Acetylglutamate kinase-like"/>
    <property type="match status" value="2"/>
</dbReference>
<dbReference type="Gene3D" id="2.30.130.10">
    <property type="entry name" value="PUA domain"/>
    <property type="match status" value="1"/>
</dbReference>
<dbReference type="HAMAP" id="MF_00456">
    <property type="entry name" value="ProB"/>
    <property type="match status" value="1"/>
</dbReference>
<dbReference type="InterPro" id="IPR036393">
    <property type="entry name" value="AceGlu_kinase-like_sf"/>
</dbReference>
<dbReference type="InterPro" id="IPR001048">
    <property type="entry name" value="Asp/Glu/Uridylate_kinase"/>
</dbReference>
<dbReference type="InterPro" id="IPR041739">
    <property type="entry name" value="G5K_ProB"/>
</dbReference>
<dbReference type="InterPro" id="IPR001057">
    <property type="entry name" value="Glu/AcGlu_kinase"/>
</dbReference>
<dbReference type="InterPro" id="IPR011529">
    <property type="entry name" value="Glu_5kinase"/>
</dbReference>
<dbReference type="InterPro" id="IPR005715">
    <property type="entry name" value="Glu_5kinase/COase_Synthase"/>
</dbReference>
<dbReference type="InterPro" id="IPR019797">
    <property type="entry name" value="Glutamate_5-kinase_CS"/>
</dbReference>
<dbReference type="InterPro" id="IPR002478">
    <property type="entry name" value="PUA"/>
</dbReference>
<dbReference type="InterPro" id="IPR015947">
    <property type="entry name" value="PUA-like_sf"/>
</dbReference>
<dbReference type="InterPro" id="IPR036974">
    <property type="entry name" value="PUA_sf"/>
</dbReference>
<dbReference type="NCBIfam" id="TIGR01027">
    <property type="entry name" value="proB"/>
    <property type="match status" value="1"/>
</dbReference>
<dbReference type="PANTHER" id="PTHR43654">
    <property type="entry name" value="GLUTAMATE 5-KINASE"/>
    <property type="match status" value="1"/>
</dbReference>
<dbReference type="PANTHER" id="PTHR43654:SF1">
    <property type="entry name" value="ISOPENTENYL PHOSPHATE KINASE"/>
    <property type="match status" value="1"/>
</dbReference>
<dbReference type="Pfam" id="PF00696">
    <property type="entry name" value="AA_kinase"/>
    <property type="match status" value="1"/>
</dbReference>
<dbReference type="Pfam" id="PF01472">
    <property type="entry name" value="PUA"/>
    <property type="match status" value="1"/>
</dbReference>
<dbReference type="PIRSF" id="PIRSF000729">
    <property type="entry name" value="GK"/>
    <property type="match status" value="1"/>
</dbReference>
<dbReference type="PRINTS" id="PR00474">
    <property type="entry name" value="GLU5KINASE"/>
</dbReference>
<dbReference type="SMART" id="SM00359">
    <property type="entry name" value="PUA"/>
    <property type="match status" value="1"/>
</dbReference>
<dbReference type="SUPFAM" id="SSF53633">
    <property type="entry name" value="Carbamate kinase-like"/>
    <property type="match status" value="1"/>
</dbReference>
<dbReference type="SUPFAM" id="SSF88697">
    <property type="entry name" value="PUA domain-like"/>
    <property type="match status" value="1"/>
</dbReference>
<dbReference type="PROSITE" id="PS00902">
    <property type="entry name" value="GLUTAMATE_5_KINASE"/>
    <property type="match status" value="1"/>
</dbReference>
<dbReference type="PROSITE" id="PS50890">
    <property type="entry name" value="PUA"/>
    <property type="match status" value="1"/>
</dbReference>
<comment type="function">
    <text evidence="1">Catalyzes the transfer of a phosphate group to glutamate to form L-glutamate 5-phosphate.</text>
</comment>
<comment type="catalytic activity">
    <reaction evidence="1">
        <text>L-glutamate + ATP = L-glutamyl 5-phosphate + ADP</text>
        <dbReference type="Rhea" id="RHEA:14877"/>
        <dbReference type="ChEBI" id="CHEBI:29985"/>
        <dbReference type="ChEBI" id="CHEBI:30616"/>
        <dbReference type="ChEBI" id="CHEBI:58274"/>
        <dbReference type="ChEBI" id="CHEBI:456216"/>
        <dbReference type="EC" id="2.7.2.11"/>
    </reaction>
</comment>
<comment type="pathway">
    <text evidence="1">Amino-acid biosynthesis; L-proline biosynthesis; L-glutamate 5-semialdehyde from L-glutamate: step 1/2.</text>
</comment>
<comment type="subcellular location">
    <subcellularLocation>
        <location evidence="1">Cytoplasm</location>
    </subcellularLocation>
</comment>
<comment type="similarity">
    <text evidence="1">Belongs to the glutamate 5-kinase family.</text>
</comment>
<gene>
    <name evidence="1" type="primary">proB</name>
    <name type="ordered locus">amb4080</name>
</gene>
<evidence type="ECO:0000255" key="1">
    <source>
        <dbReference type="HAMAP-Rule" id="MF_00456"/>
    </source>
</evidence>
<name>PROB_PARM1</name>
<reference key="1">
    <citation type="journal article" date="2005" name="DNA Res.">
        <title>Complete genome sequence of the facultative anaerobic magnetotactic bacterium Magnetospirillum sp. strain AMB-1.</title>
        <authorList>
            <person name="Matsunaga T."/>
            <person name="Okamura Y."/>
            <person name="Fukuda Y."/>
            <person name="Wahyudi A.T."/>
            <person name="Murase Y."/>
            <person name="Takeyama H."/>
        </authorList>
    </citation>
    <scope>NUCLEOTIDE SEQUENCE [LARGE SCALE GENOMIC DNA]</scope>
    <source>
        <strain>ATCC 700264 / AMB-1</strain>
    </source>
</reference>